<feature type="chain" id="PRO_1000083946" description="UDP-N-acetyl-D-mannosaminuronic acid transferase">
    <location>
        <begin position="1"/>
        <end position="246"/>
    </location>
</feature>
<organism>
    <name type="scientific">Escherichia coli (strain ATCC 8739 / DSM 1576 / NBRC 3972 / NCIMB 8545 / WDCM 00012 / Crooks)</name>
    <dbReference type="NCBI Taxonomy" id="481805"/>
    <lineage>
        <taxon>Bacteria</taxon>
        <taxon>Pseudomonadati</taxon>
        <taxon>Pseudomonadota</taxon>
        <taxon>Gammaproteobacteria</taxon>
        <taxon>Enterobacterales</taxon>
        <taxon>Enterobacteriaceae</taxon>
        <taxon>Escherichia</taxon>
    </lineage>
</organism>
<reference key="1">
    <citation type="submission" date="2008-02" db="EMBL/GenBank/DDBJ databases">
        <title>Complete sequence of Escherichia coli C str. ATCC 8739.</title>
        <authorList>
            <person name="Copeland A."/>
            <person name="Lucas S."/>
            <person name="Lapidus A."/>
            <person name="Glavina del Rio T."/>
            <person name="Dalin E."/>
            <person name="Tice H."/>
            <person name="Bruce D."/>
            <person name="Goodwin L."/>
            <person name="Pitluck S."/>
            <person name="Kiss H."/>
            <person name="Brettin T."/>
            <person name="Detter J.C."/>
            <person name="Han C."/>
            <person name="Kuske C.R."/>
            <person name="Schmutz J."/>
            <person name="Larimer F."/>
            <person name="Land M."/>
            <person name="Hauser L."/>
            <person name="Kyrpides N."/>
            <person name="Mikhailova N."/>
            <person name="Ingram L."/>
            <person name="Richardson P."/>
        </authorList>
    </citation>
    <scope>NUCLEOTIDE SEQUENCE [LARGE SCALE GENOMIC DNA]</scope>
    <source>
        <strain>ATCC 8739 / DSM 1576 / NBRC 3972 / NCIMB 8545 / WDCM 00012 / Crooks</strain>
    </source>
</reference>
<comment type="function">
    <text evidence="1">Catalyzes the synthesis of Und-PP-GlcNAc-ManNAcA (Lipid II), the second lipid-linked intermediate involved in enterobacterial common antigen (ECA) synthesis.</text>
</comment>
<comment type="catalytic activity">
    <reaction evidence="1">
        <text>UDP-N-acetyl-alpha-D-mannosaminouronate + N-acetyl-alpha-D-glucosaminyl-di-trans,octa-cis-undecaprenyl diphosphate = beta-D-ManNAcA-(1-&gt;4)-alpha-D-GlcNAc-di-trans,octa-cis-undecaprenyl diphosphate + UDP + H(+)</text>
        <dbReference type="Rhea" id="RHEA:28366"/>
        <dbReference type="ChEBI" id="CHEBI:15378"/>
        <dbReference type="ChEBI" id="CHEBI:58223"/>
        <dbReference type="ChEBI" id="CHEBI:61495"/>
        <dbReference type="ChEBI" id="CHEBI:62959"/>
        <dbReference type="ChEBI" id="CHEBI:70731"/>
        <dbReference type="EC" id="2.4.1.180"/>
    </reaction>
</comment>
<comment type="pathway">
    <text evidence="1">Bacterial outer membrane biogenesis; enterobacterial common antigen biosynthesis.</text>
</comment>
<comment type="similarity">
    <text evidence="1">Belongs to the glycosyltransferase 26 family.</text>
</comment>
<accession>B1IWA5</accession>
<sequence>MNNNTTAPTYTLRGLQLIGWRDMQHALDYLFADGHLKQGTLVAINAEKMLTIEDNAEVRELINAAEFKYADGISVVRSVRKKYPQAQVSRVAGADLWEELMARAGKEGTPVFLVGGKPEVLAQTEAKLRNQWNVNIVGSQDGYFKPEQRQALFERIHASGAQIVTVAMGSPKQEIFMRDCRLVHPDALYMGVGGTYDVFTGHVKRAPKIWQTLGLEWLYRLLSQPSRIKRQLRLLRYLRWHYTGNL</sequence>
<protein>
    <recommendedName>
        <fullName evidence="1">UDP-N-acetyl-D-mannosaminuronic acid transferase</fullName>
        <shortName evidence="1">UDP-ManNAcA transferase</shortName>
        <ecNumber evidence="1">2.4.1.180</ecNumber>
    </recommendedName>
</protein>
<gene>
    <name evidence="1" type="primary">wecG</name>
    <name evidence="1" type="synonym">rffM</name>
    <name type="ordered locus">EcolC_4208</name>
</gene>
<keyword id="KW-0328">Glycosyltransferase</keyword>
<keyword id="KW-0808">Transferase</keyword>
<name>WECG_ECOLC</name>
<dbReference type="EC" id="2.4.1.180" evidence="1"/>
<dbReference type="EMBL" id="CP000946">
    <property type="protein sequence ID" value="ACA79805.1"/>
    <property type="molecule type" value="Genomic_DNA"/>
</dbReference>
<dbReference type="RefSeq" id="WP_001064025.1">
    <property type="nucleotide sequence ID" value="NZ_MTFT01000015.1"/>
</dbReference>
<dbReference type="SMR" id="B1IWA5"/>
<dbReference type="CAZy" id="GT26">
    <property type="family name" value="Glycosyltransferase Family 26"/>
</dbReference>
<dbReference type="KEGG" id="ecl:EcolC_4208"/>
<dbReference type="HOGENOM" id="CLU_063203_3_2_6"/>
<dbReference type="UniPathway" id="UPA00566"/>
<dbReference type="GO" id="GO:0047241">
    <property type="term" value="F:lipopolysaccharide N-acetylmannosaminouronosyltransferase activity"/>
    <property type="evidence" value="ECO:0007669"/>
    <property type="project" value="UniProtKB-UniRule"/>
</dbReference>
<dbReference type="GO" id="GO:0009246">
    <property type="term" value="P:enterobacterial common antigen biosynthetic process"/>
    <property type="evidence" value="ECO:0007669"/>
    <property type="project" value="UniProtKB-UniRule"/>
</dbReference>
<dbReference type="CDD" id="cd06533">
    <property type="entry name" value="Glyco_transf_WecG_TagA"/>
    <property type="match status" value="1"/>
</dbReference>
<dbReference type="HAMAP" id="MF_01001">
    <property type="entry name" value="WecG_RffM"/>
    <property type="match status" value="1"/>
</dbReference>
<dbReference type="InterPro" id="IPR023085">
    <property type="entry name" value="UDP-ManNAcA_Trfase_WecG"/>
</dbReference>
<dbReference type="InterPro" id="IPR004629">
    <property type="entry name" value="WecG_TagA_CpsF"/>
</dbReference>
<dbReference type="NCBIfam" id="NF002980">
    <property type="entry name" value="PRK03692.1"/>
    <property type="match status" value="1"/>
</dbReference>
<dbReference type="NCBIfam" id="TIGR00696">
    <property type="entry name" value="wecG_tagA_cpsF"/>
    <property type="match status" value="1"/>
</dbReference>
<dbReference type="PANTHER" id="PTHR34136">
    <property type="match status" value="1"/>
</dbReference>
<dbReference type="PANTHER" id="PTHR34136:SF1">
    <property type="entry name" value="UDP-N-ACETYL-D-MANNOSAMINURONIC ACID TRANSFERASE"/>
    <property type="match status" value="1"/>
</dbReference>
<dbReference type="Pfam" id="PF03808">
    <property type="entry name" value="Glyco_tran_WecG"/>
    <property type="match status" value="1"/>
</dbReference>
<proteinExistence type="inferred from homology"/>
<evidence type="ECO:0000255" key="1">
    <source>
        <dbReference type="HAMAP-Rule" id="MF_01001"/>
    </source>
</evidence>